<sequence length="406" mass="44480">MQTLESTLNPPATASEFDTTIHRRKTRPVQVGSVTIGGGHPVVVQSMINEDTLDIDGSVAGIRRLHEIGCEIVRVTVPSLVHATALAKIREKLLATYQPVPLVADVHHNGMKIALEVAKHVDKVRINPGLYVFEKPKADRSEYSQAEFDEIGEKIAETLKPLVVSLRDQDKAMRIGVNHGSLAERMLFTYGDTPEGMVQSALEFIRICESLDFRNLVVSLKASRVPVMVAAYRLMVKRMDELGMDYPLHLGVTEAGDGEYGRIKSTAGIATLLADGIGDTIRVSLTEAPEKEIPVCYSILQALGLRKTMVEYVACPSCGRTLFNLEDVLQQVRAATQHLTGLDIAVMGCIVNGPGEMADADYGYVGKQAGYISLYRGREEIKRVPESEGVSELINLIKADGRWVEP</sequence>
<keyword id="KW-0004">4Fe-4S</keyword>
<keyword id="KW-0408">Iron</keyword>
<keyword id="KW-0411">Iron-sulfur</keyword>
<keyword id="KW-0414">Isoprene biosynthesis</keyword>
<keyword id="KW-0479">Metal-binding</keyword>
<keyword id="KW-0560">Oxidoreductase</keyword>
<organism>
    <name type="scientific">Microcystis aeruginosa (strain NIES-843 / IAM M-2473)</name>
    <dbReference type="NCBI Taxonomy" id="449447"/>
    <lineage>
        <taxon>Bacteria</taxon>
        <taxon>Bacillati</taxon>
        <taxon>Cyanobacteriota</taxon>
        <taxon>Cyanophyceae</taxon>
        <taxon>Oscillatoriophycideae</taxon>
        <taxon>Chroococcales</taxon>
        <taxon>Microcystaceae</taxon>
        <taxon>Microcystis</taxon>
    </lineage>
</organism>
<evidence type="ECO:0000255" key="1">
    <source>
        <dbReference type="HAMAP-Rule" id="MF_00159"/>
    </source>
</evidence>
<gene>
    <name evidence="1" type="primary">ispG</name>
    <name type="ordered locus">MAE_28180</name>
</gene>
<protein>
    <recommendedName>
        <fullName evidence="1">4-hydroxy-3-methylbut-2-en-1-yl diphosphate synthase (ferredoxin)</fullName>
        <ecNumber evidence="1">1.17.7.1</ecNumber>
    </recommendedName>
    <alternativeName>
        <fullName evidence="1">1-hydroxy-2-methyl-2-(E)-butenyl 4-diphosphate synthase</fullName>
    </alternativeName>
</protein>
<dbReference type="EC" id="1.17.7.1" evidence="1"/>
<dbReference type="EMBL" id="AP009552">
    <property type="protein sequence ID" value="BAG02640.1"/>
    <property type="molecule type" value="Genomic_DNA"/>
</dbReference>
<dbReference type="RefSeq" id="WP_002798930.1">
    <property type="nucleotide sequence ID" value="NC_010296.1"/>
</dbReference>
<dbReference type="SMR" id="B0JJJ8"/>
<dbReference type="STRING" id="449447.MAE_28180"/>
<dbReference type="PaxDb" id="449447-MAE_28180"/>
<dbReference type="EnsemblBacteria" id="BAG02640">
    <property type="protein sequence ID" value="BAG02640"/>
    <property type="gene ID" value="MAE_28180"/>
</dbReference>
<dbReference type="KEGG" id="mar:MAE_28180"/>
<dbReference type="eggNOG" id="COG0821">
    <property type="taxonomic scope" value="Bacteria"/>
</dbReference>
<dbReference type="HOGENOM" id="CLU_042258_0_0_3"/>
<dbReference type="BioCyc" id="MAER449447:MAE_RS12295-MONOMER"/>
<dbReference type="UniPathway" id="UPA00056">
    <property type="reaction ID" value="UER00096"/>
</dbReference>
<dbReference type="Proteomes" id="UP000001510">
    <property type="component" value="Chromosome"/>
</dbReference>
<dbReference type="GO" id="GO:0051539">
    <property type="term" value="F:4 iron, 4 sulfur cluster binding"/>
    <property type="evidence" value="ECO:0007669"/>
    <property type="project" value="UniProtKB-UniRule"/>
</dbReference>
<dbReference type="GO" id="GO:0046429">
    <property type="term" value="F:4-hydroxy-3-methylbut-2-en-1-yl diphosphate synthase activity (ferredoxin)"/>
    <property type="evidence" value="ECO:0007669"/>
    <property type="project" value="UniProtKB-UniRule"/>
</dbReference>
<dbReference type="GO" id="GO:0005506">
    <property type="term" value="F:iron ion binding"/>
    <property type="evidence" value="ECO:0007669"/>
    <property type="project" value="InterPro"/>
</dbReference>
<dbReference type="GO" id="GO:0019288">
    <property type="term" value="P:isopentenyl diphosphate biosynthetic process, methylerythritol 4-phosphate pathway"/>
    <property type="evidence" value="ECO:0007669"/>
    <property type="project" value="UniProtKB-UniRule"/>
</dbReference>
<dbReference type="GO" id="GO:0016114">
    <property type="term" value="P:terpenoid biosynthetic process"/>
    <property type="evidence" value="ECO:0007669"/>
    <property type="project" value="InterPro"/>
</dbReference>
<dbReference type="FunFam" id="3.20.20.20:FF:000005">
    <property type="entry name" value="4-hydroxy-3-methylbut-2-en-1-yl diphosphate synthase (flavodoxin)"/>
    <property type="match status" value="1"/>
</dbReference>
<dbReference type="Gene3D" id="3.20.20.20">
    <property type="entry name" value="Dihydropteroate synthase-like"/>
    <property type="match status" value="1"/>
</dbReference>
<dbReference type="Gene3D" id="3.30.413.10">
    <property type="entry name" value="Sulfite Reductase Hemoprotein, domain 1"/>
    <property type="match status" value="1"/>
</dbReference>
<dbReference type="HAMAP" id="MF_00159">
    <property type="entry name" value="IspG"/>
    <property type="match status" value="1"/>
</dbReference>
<dbReference type="InterPro" id="IPR011005">
    <property type="entry name" value="Dihydropteroate_synth-like_sf"/>
</dbReference>
<dbReference type="InterPro" id="IPR016425">
    <property type="entry name" value="IspG_bac"/>
</dbReference>
<dbReference type="InterPro" id="IPR004588">
    <property type="entry name" value="IspG_bac-typ"/>
</dbReference>
<dbReference type="InterPro" id="IPR045854">
    <property type="entry name" value="NO2/SO3_Rdtase_4Fe4S_sf"/>
</dbReference>
<dbReference type="NCBIfam" id="TIGR00612">
    <property type="entry name" value="ispG_gcpE"/>
    <property type="match status" value="1"/>
</dbReference>
<dbReference type="NCBIfam" id="NF001540">
    <property type="entry name" value="PRK00366.1"/>
    <property type="match status" value="1"/>
</dbReference>
<dbReference type="PANTHER" id="PTHR30454">
    <property type="entry name" value="4-HYDROXY-3-METHYLBUT-2-EN-1-YL DIPHOSPHATE SYNTHASE"/>
    <property type="match status" value="1"/>
</dbReference>
<dbReference type="PANTHER" id="PTHR30454:SF0">
    <property type="entry name" value="4-HYDROXY-3-METHYLBUT-2-EN-1-YL DIPHOSPHATE SYNTHASE (FERREDOXIN), CHLOROPLASTIC"/>
    <property type="match status" value="1"/>
</dbReference>
<dbReference type="Pfam" id="PF04551">
    <property type="entry name" value="GcpE"/>
    <property type="match status" value="1"/>
</dbReference>
<dbReference type="PIRSF" id="PIRSF004640">
    <property type="entry name" value="IspG"/>
    <property type="match status" value="1"/>
</dbReference>
<dbReference type="SUPFAM" id="SSF56014">
    <property type="entry name" value="Nitrite and sulphite reductase 4Fe-4S domain-like"/>
    <property type="match status" value="1"/>
</dbReference>
<reference key="1">
    <citation type="journal article" date="2007" name="DNA Res.">
        <title>Complete genomic structure of the bloom-forming toxic cyanobacterium Microcystis aeruginosa NIES-843.</title>
        <authorList>
            <person name="Kaneko T."/>
            <person name="Nakajima N."/>
            <person name="Okamoto S."/>
            <person name="Suzuki I."/>
            <person name="Tanabe Y."/>
            <person name="Tamaoki M."/>
            <person name="Nakamura Y."/>
            <person name="Kasai F."/>
            <person name="Watanabe A."/>
            <person name="Kawashima K."/>
            <person name="Kishida Y."/>
            <person name="Ono A."/>
            <person name="Shimizu Y."/>
            <person name="Takahashi C."/>
            <person name="Minami C."/>
            <person name="Fujishiro T."/>
            <person name="Kohara M."/>
            <person name="Katoh M."/>
            <person name="Nakazaki N."/>
            <person name="Nakayama S."/>
            <person name="Yamada M."/>
            <person name="Tabata S."/>
            <person name="Watanabe M.M."/>
        </authorList>
    </citation>
    <scope>NUCLEOTIDE SEQUENCE [LARGE SCALE GENOMIC DNA]</scope>
    <source>
        <strain>NIES-843 / IAM M-247</strain>
    </source>
</reference>
<name>ISPG_MICAN</name>
<proteinExistence type="inferred from homology"/>
<feature type="chain" id="PRO_1000076889" description="4-hydroxy-3-methylbut-2-en-1-yl diphosphate synthase (ferredoxin)">
    <location>
        <begin position="1"/>
        <end position="406"/>
    </location>
</feature>
<feature type="binding site" evidence="1">
    <location>
        <position position="315"/>
    </location>
    <ligand>
        <name>[4Fe-4S] cluster</name>
        <dbReference type="ChEBI" id="CHEBI:49883"/>
    </ligand>
</feature>
<feature type="binding site" evidence="1">
    <location>
        <position position="318"/>
    </location>
    <ligand>
        <name>[4Fe-4S] cluster</name>
        <dbReference type="ChEBI" id="CHEBI:49883"/>
    </ligand>
</feature>
<feature type="binding site" evidence="1">
    <location>
        <position position="349"/>
    </location>
    <ligand>
        <name>[4Fe-4S] cluster</name>
        <dbReference type="ChEBI" id="CHEBI:49883"/>
    </ligand>
</feature>
<feature type="binding site" evidence="1">
    <location>
        <position position="356"/>
    </location>
    <ligand>
        <name>[4Fe-4S] cluster</name>
        <dbReference type="ChEBI" id="CHEBI:49883"/>
    </ligand>
</feature>
<accession>B0JJJ8</accession>
<comment type="function">
    <text evidence="1">Converts 2C-methyl-D-erythritol 2,4-cyclodiphosphate (ME-2,4cPP) into 1-hydroxy-2-methyl-2-(E)-butenyl 4-diphosphate.</text>
</comment>
<comment type="catalytic activity">
    <reaction evidence="1">
        <text>(2E)-4-hydroxy-3-methylbut-2-enyl diphosphate + 2 oxidized [2Fe-2S]-[ferredoxin] + H2O = 2-C-methyl-D-erythritol 2,4-cyclic diphosphate + 2 reduced [2Fe-2S]-[ferredoxin] + H(+)</text>
        <dbReference type="Rhea" id="RHEA:26119"/>
        <dbReference type="Rhea" id="RHEA-COMP:10000"/>
        <dbReference type="Rhea" id="RHEA-COMP:10001"/>
        <dbReference type="ChEBI" id="CHEBI:15377"/>
        <dbReference type="ChEBI" id="CHEBI:15378"/>
        <dbReference type="ChEBI" id="CHEBI:33737"/>
        <dbReference type="ChEBI" id="CHEBI:33738"/>
        <dbReference type="ChEBI" id="CHEBI:58483"/>
        <dbReference type="ChEBI" id="CHEBI:128753"/>
        <dbReference type="EC" id="1.17.7.1"/>
    </reaction>
</comment>
<comment type="cofactor">
    <cofactor evidence="1">
        <name>[4Fe-4S] cluster</name>
        <dbReference type="ChEBI" id="CHEBI:49883"/>
    </cofactor>
    <text evidence="1">Binds 1 [4Fe-4S] cluster.</text>
</comment>
<comment type="pathway">
    <text evidence="1">Isoprenoid biosynthesis; isopentenyl diphosphate biosynthesis via DXP pathway; isopentenyl diphosphate from 1-deoxy-D-xylulose 5-phosphate: step 5/6.</text>
</comment>
<comment type="similarity">
    <text evidence="1">Belongs to the IspG family.</text>
</comment>